<comment type="function">
    <text evidence="1">Catalyzes the phosphorylation of pantothenate (Pan), the first step in CoA biosynthesis.</text>
</comment>
<comment type="catalytic activity">
    <reaction evidence="1">
        <text>(R)-pantothenate + ATP = (R)-4'-phosphopantothenate + ADP + H(+)</text>
        <dbReference type="Rhea" id="RHEA:16373"/>
        <dbReference type="ChEBI" id="CHEBI:10986"/>
        <dbReference type="ChEBI" id="CHEBI:15378"/>
        <dbReference type="ChEBI" id="CHEBI:29032"/>
        <dbReference type="ChEBI" id="CHEBI:30616"/>
        <dbReference type="ChEBI" id="CHEBI:456216"/>
        <dbReference type="EC" id="2.7.1.33"/>
    </reaction>
</comment>
<comment type="cofactor">
    <cofactor evidence="1">
        <name>NH4(+)</name>
        <dbReference type="ChEBI" id="CHEBI:28938"/>
    </cofactor>
    <cofactor evidence="1">
        <name>K(+)</name>
        <dbReference type="ChEBI" id="CHEBI:29103"/>
    </cofactor>
    <text evidence="1">A monovalent cation. Ammonium or potassium.</text>
</comment>
<comment type="pathway">
    <text evidence="1">Cofactor biosynthesis; coenzyme A biosynthesis; CoA from (R)-pantothenate: step 1/5.</text>
</comment>
<comment type="subunit">
    <text evidence="1">Homodimer.</text>
</comment>
<comment type="subcellular location">
    <subcellularLocation>
        <location evidence="1">Cytoplasm</location>
    </subcellularLocation>
</comment>
<comment type="similarity">
    <text evidence="1">Belongs to the type III pantothenate kinase family.</text>
</comment>
<reference key="1">
    <citation type="journal article" date="2005" name="Proc. Natl. Acad. Sci. U.S.A.">
        <title>Comparison of the complete genome sequences of Pseudomonas syringae pv. syringae B728a and pv. tomato DC3000.</title>
        <authorList>
            <person name="Feil H."/>
            <person name="Feil W.S."/>
            <person name="Chain P."/>
            <person name="Larimer F."/>
            <person name="Dibartolo G."/>
            <person name="Copeland A."/>
            <person name="Lykidis A."/>
            <person name="Trong S."/>
            <person name="Nolan M."/>
            <person name="Goltsman E."/>
            <person name="Thiel J."/>
            <person name="Malfatti S."/>
            <person name="Loper J.E."/>
            <person name="Lapidus A."/>
            <person name="Detter J.C."/>
            <person name="Land M."/>
            <person name="Richardson P.M."/>
            <person name="Kyrpides N.C."/>
            <person name="Ivanova N."/>
            <person name="Lindow S.E."/>
        </authorList>
    </citation>
    <scope>NUCLEOTIDE SEQUENCE [LARGE SCALE GENOMIC DNA]</scope>
    <source>
        <strain>B728a</strain>
    </source>
</reference>
<feature type="chain" id="PRO_0000267579" description="Type III pantothenate kinase">
    <location>
        <begin position="1"/>
        <end position="249"/>
    </location>
</feature>
<feature type="active site" description="Proton acceptor" evidence="1">
    <location>
        <position position="102"/>
    </location>
</feature>
<feature type="binding site" evidence="1">
    <location>
        <begin position="6"/>
        <end position="13"/>
    </location>
    <ligand>
        <name>ATP</name>
        <dbReference type="ChEBI" id="CHEBI:30616"/>
    </ligand>
</feature>
<feature type="binding site" evidence="1">
    <location>
        <position position="93"/>
    </location>
    <ligand>
        <name>substrate</name>
    </ligand>
</feature>
<feature type="binding site" evidence="1">
    <location>
        <begin position="100"/>
        <end position="103"/>
    </location>
    <ligand>
        <name>substrate</name>
    </ligand>
</feature>
<feature type="binding site" evidence="1">
    <location>
        <position position="122"/>
    </location>
    <ligand>
        <name>K(+)</name>
        <dbReference type="ChEBI" id="CHEBI:29103"/>
    </ligand>
</feature>
<feature type="binding site" evidence="1">
    <location>
        <position position="125"/>
    </location>
    <ligand>
        <name>ATP</name>
        <dbReference type="ChEBI" id="CHEBI:30616"/>
    </ligand>
</feature>
<feature type="binding site" evidence="1">
    <location>
        <position position="181"/>
    </location>
    <ligand>
        <name>substrate</name>
    </ligand>
</feature>
<keyword id="KW-0067">ATP-binding</keyword>
<keyword id="KW-0173">Coenzyme A biosynthesis</keyword>
<keyword id="KW-0963">Cytoplasm</keyword>
<keyword id="KW-0418">Kinase</keyword>
<keyword id="KW-0479">Metal-binding</keyword>
<keyword id="KW-0547">Nucleotide-binding</keyword>
<keyword id="KW-0630">Potassium</keyword>
<keyword id="KW-0808">Transferase</keyword>
<organism>
    <name type="scientific">Pseudomonas syringae pv. syringae (strain B728a)</name>
    <dbReference type="NCBI Taxonomy" id="205918"/>
    <lineage>
        <taxon>Bacteria</taxon>
        <taxon>Pseudomonadati</taxon>
        <taxon>Pseudomonadota</taxon>
        <taxon>Gammaproteobacteria</taxon>
        <taxon>Pseudomonadales</taxon>
        <taxon>Pseudomonadaceae</taxon>
        <taxon>Pseudomonas</taxon>
        <taxon>Pseudomonas syringae</taxon>
    </lineage>
</organism>
<proteinExistence type="inferred from homology"/>
<accession>Q4ZMM9</accession>
<sequence>MILELDCGNSFIKWRITTKSDAAVVSVGVVDSDAALLEHLRNLSDTTFSDCRLVSVRSAEETARLVSVLTNAFSVTPVCAVPARELGGVVNGYDDFERLGLDRWLAFVGAYHLVKRACLVIDLGTAVTSDFVDAGGAHLGGFICPGMPLMRNQLRTHTRRIRYDDTEAERALVRLVPGRATAEAVERGCSLMLRGFALTQVEIARGYWGDDFAIFVTGGDAALVADVLPGARIVPDLVFVGLALACPLR</sequence>
<dbReference type="EC" id="2.7.1.33" evidence="1"/>
<dbReference type="EMBL" id="CP000075">
    <property type="protein sequence ID" value="AAY39593.1"/>
    <property type="molecule type" value="Genomic_DNA"/>
</dbReference>
<dbReference type="RefSeq" id="WP_003400448.1">
    <property type="nucleotide sequence ID" value="NC_007005.1"/>
</dbReference>
<dbReference type="RefSeq" id="YP_237631.1">
    <property type="nucleotide sequence ID" value="NC_007005.1"/>
</dbReference>
<dbReference type="SMR" id="Q4ZMM9"/>
<dbReference type="STRING" id="205918.Psyr_4563"/>
<dbReference type="KEGG" id="psb:Psyr_4563"/>
<dbReference type="PATRIC" id="fig|205918.7.peg.4702"/>
<dbReference type="eggNOG" id="COG1521">
    <property type="taxonomic scope" value="Bacteria"/>
</dbReference>
<dbReference type="HOGENOM" id="CLU_066627_0_1_6"/>
<dbReference type="OrthoDB" id="9781305at2"/>
<dbReference type="UniPathway" id="UPA00241">
    <property type="reaction ID" value="UER00352"/>
</dbReference>
<dbReference type="Proteomes" id="UP000000426">
    <property type="component" value="Chromosome"/>
</dbReference>
<dbReference type="GO" id="GO:0005737">
    <property type="term" value="C:cytoplasm"/>
    <property type="evidence" value="ECO:0007669"/>
    <property type="project" value="UniProtKB-SubCell"/>
</dbReference>
<dbReference type="GO" id="GO:0005524">
    <property type="term" value="F:ATP binding"/>
    <property type="evidence" value="ECO:0007669"/>
    <property type="project" value="UniProtKB-UniRule"/>
</dbReference>
<dbReference type="GO" id="GO:0046872">
    <property type="term" value="F:metal ion binding"/>
    <property type="evidence" value="ECO:0007669"/>
    <property type="project" value="UniProtKB-KW"/>
</dbReference>
<dbReference type="GO" id="GO:0004594">
    <property type="term" value="F:pantothenate kinase activity"/>
    <property type="evidence" value="ECO:0007669"/>
    <property type="project" value="UniProtKB-UniRule"/>
</dbReference>
<dbReference type="GO" id="GO:0015937">
    <property type="term" value="P:coenzyme A biosynthetic process"/>
    <property type="evidence" value="ECO:0007669"/>
    <property type="project" value="UniProtKB-UniRule"/>
</dbReference>
<dbReference type="CDD" id="cd24015">
    <property type="entry name" value="ASKHA_NBD_PanK-III"/>
    <property type="match status" value="1"/>
</dbReference>
<dbReference type="Gene3D" id="3.30.420.40">
    <property type="match status" value="2"/>
</dbReference>
<dbReference type="HAMAP" id="MF_01274">
    <property type="entry name" value="Pantothen_kinase_3"/>
    <property type="match status" value="1"/>
</dbReference>
<dbReference type="InterPro" id="IPR043129">
    <property type="entry name" value="ATPase_NBD"/>
</dbReference>
<dbReference type="InterPro" id="IPR004619">
    <property type="entry name" value="Type_III_PanK"/>
</dbReference>
<dbReference type="NCBIfam" id="TIGR00671">
    <property type="entry name" value="baf"/>
    <property type="match status" value="1"/>
</dbReference>
<dbReference type="NCBIfam" id="NF009857">
    <property type="entry name" value="PRK13322.1-2"/>
    <property type="match status" value="1"/>
</dbReference>
<dbReference type="NCBIfam" id="NF009859">
    <property type="entry name" value="PRK13322.1-4"/>
    <property type="match status" value="1"/>
</dbReference>
<dbReference type="PANTHER" id="PTHR34265">
    <property type="entry name" value="TYPE III PANTOTHENATE KINASE"/>
    <property type="match status" value="1"/>
</dbReference>
<dbReference type="PANTHER" id="PTHR34265:SF1">
    <property type="entry name" value="TYPE III PANTOTHENATE KINASE"/>
    <property type="match status" value="1"/>
</dbReference>
<dbReference type="Pfam" id="PF03309">
    <property type="entry name" value="Pan_kinase"/>
    <property type="match status" value="1"/>
</dbReference>
<dbReference type="SUPFAM" id="SSF53067">
    <property type="entry name" value="Actin-like ATPase domain"/>
    <property type="match status" value="2"/>
</dbReference>
<name>COAX_PSEU2</name>
<protein>
    <recommendedName>
        <fullName evidence="1">Type III pantothenate kinase</fullName>
        <ecNumber evidence="1">2.7.1.33</ecNumber>
    </recommendedName>
    <alternativeName>
        <fullName evidence="1">PanK-III</fullName>
    </alternativeName>
    <alternativeName>
        <fullName evidence="1">Pantothenic acid kinase</fullName>
    </alternativeName>
</protein>
<evidence type="ECO:0000255" key="1">
    <source>
        <dbReference type="HAMAP-Rule" id="MF_01274"/>
    </source>
</evidence>
<gene>
    <name evidence="1" type="primary">coaX</name>
    <name type="ordered locus">Psyr_4563</name>
</gene>